<organismHost>
    <name type="scientific">Aves</name>
    <dbReference type="NCBI Taxonomy" id="8782"/>
</organismHost>
<organismHost>
    <name type="scientific">Felis catus</name>
    <name type="common">Cat</name>
    <name type="synonym">Felis silvestris catus</name>
    <dbReference type="NCBI Taxonomy" id="9685"/>
</organismHost>
<organismHost>
    <name type="scientific">Homo sapiens</name>
    <name type="common">Human</name>
    <dbReference type="NCBI Taxonomy" id="9606"/>
</organismHost>
<organismHost>
    <name type="scientific">Panthera pardus</name>
    <name type="common">Leopard</name>
    <name type="synonym">Felis pardus</name>
    <dbReference type="NCBI Taxonomy" id="9691"/>
</organismHost>
<organismHost>
    <name type="scientific">Panthera tigris</name>
    <name type="common">Tiger</name>
    <dbReference type="NCBI Taxonomy" id="9694"/>
</organismHost>
<organismHost>
    <name type="scientific">Sus scrofa</name>
    <name type="common">Pig</name>
    <dbReference type="NCBI Taxonomy" id="9823"/>
</organismHost>
<evidence type="ECO:0000250" key="1"/>
<evidence type="ECO:0000305" key="2"/>
<accession>Q6DPU2</accession>
<gene>
    <name type="primary">M</name>
</gene>
<protein>
    <recommendedName>
        <fullName>Matrix protein 1</fullName>
        <shortName>M1</shortName>
    </recommendedName>
</protein>
<sequence length="245" mass="27162">ETYVLSIVPSGPLKAEIAQRLEDVFAGKNTDLEALMEWLKTRPILSPLTKGILGFVFTLTVPSERGLQRRRFVQNALNGNGDPNNMDRAVKLYKKLKREITFHGAKEVALSYSTGALASCMGLIYNRMGTVTTEVAFGLVCATCEQIADSQHRSHRQMATITNPLIRHENRMVLASTTAKAMEQMAGSSEQAAEAMEVASQARQMVQAMRTIGTHPNSSTGLRDNLLENLQAYQNRMGVQMQRFK</sequence>
<organism>
    <name type="scientific">Influenza A virus (strain A/Guinea fowl/Hong Kong/38/2002 H5N1 genotype X0)</name>
    <dbReference type="NCBI Taxonomy" id="284208"/>
    <lineage>
        <taxon>Viruses</taxon>
        <taxon>Riboviria</taxon>
        <taxon>Orthornavirae</taxon>
        <taxon>Negarnaviricota</taxon>
        <taxon>Polyploviricotina</taxon>
        <taxon>Insthoviricetes</taxon>
        <taxon>Articulavirales</taxon>
        <taxon>Orthomyxoviridae</taxon>
        <taxon>Alphainfluenzavirus</taxon>
        <taxon>Alphainfluenzavirus influenzae</taxon>
        <taxon>Influenza A virus</taxon>
    </lineage>
</organism>
<dbReference type="EMBL" id="AY651399">
    <property type="protein sequence ID" value="AAT70551.1"/>
    <property type="molecule type" value="Genomic_RNA"/>
</dbReference>
<dbReference type="SMR" id="Q6DPU2"/>
<dbReference type="IntAct" id="Q6DPU2">
    <property type="interactions" value="1"/>
</dbReference>
<dbReference type="GO" id="GO:0042025">
    <property type="term" value="C:host cell nucleus"/>
    <property type="evidence" value="ECO:0007669"/>
    <property type="project" value="UniProtKB-SubCell"/>
</dbReference>
<dbReference type="GO" id="GO:0016020">
    <property type="term" value="C:membrane"/>
    <property type="evidence" value="ECO:0007669"/>
    <property type="project" value="UniProtKB-KW"/>
</dbReference>
<dbReference type="GO" id="GO:0055036">
    <property type="term" value="C:virion membrane"/>
    <property type="evidence" value="ECO:0007669"/>
    <property type="project" value="UniProtKB-SubCell"/>
</dbReference>
<dbReference type="GO" id="GO:0003723">
    <property type="term" value="F:RNA binding"/>
    <property type="evidence" value="ECO:0007669"/>
    <property type="project" value="UniProtKB-KW"/>
</dbReference>
<dbReference type="GO" id="GO:0039660">
    <property type="term" value="F:structural constituent of virion"/>
    <property type="evidence" value="ECO:0007669"/>
    <property type="project" value="UniProtKB-KW"/>
</dbReference>
<dbReference type="FunFam" id="1.10.10.180:FF:000001">
    <property type="entry name" value="Matrix protein 1"/>
    <property type="match status" value="1"/>
</dbReference>
<dbReference type="Gene3D" id="1.10.10.180">
    <property type="match status" value="1"/>
</dbReference>
<dbReference type="Gene3D" id="1.20.91.10">
    <property type="match status" value="1"/>
</dbReference>
<dbReference type="InterPro" id="IPR036039">
    <property type="entry name" value="Flu_matrix_M1"/>
</dbReference>
<dbReference type="InterPro" id="IPR013188">
    <property type="entry name" value="Flu_matrix_M1_C"/>
</dbReference>
<dbReference type="InterPro" id="IPR001561">
    <property type="entry name" value="Flu_matrix_M1_N"/>
</dbReference>
<dbReference type="InterPro" id="IPR015423">
    <property type="entry name" value="Flu_matrix_M1_N_sub1"/>
</dbReference>
<dbReference type="InterPro" id="IPR015799">
    <property type="entry name" value="Flu_matrix_M1_N_sub2"/>
</dbReference>
<dbReference type="Pfam" id="PF00598">
    <property type="entry name" value="Flu_M1"/>
    <property type="match status" value="1"/>
</dbReference>
<dbReference type="Pfam" id="PF08289">
    <property type="entry name" value="Flu_M1_C"/>
    <property type="match status" value="1"/>
</dbReference>
<dbReference type="SMART" id="SM00759">
    <property type="entry name" value="Flu_M1_C"/>
    <property type="match status" value="1"/>
</dbReference>
<dbReference type="SUPFAM" id="SSF48145">
    <property type="entry name" value="Influenza virus matrix protein M1"/>
    <property type="match status" value="1"/>
</dbReference>
<reference key="1">
    <citation type="journal article" date="2004" name="Nature">
        <title>Genesis of a highly pathogenic and potentially pandemic H5N1 influenza virus in eastern Asia.</title>
        <authorList>
            <person name="Li K.S."/>
            <person name="Guan Y."/>
            <person name="Wang J."/>
            <person name="Smith G.J.D."/>
            <person name="Xu K.M."/>
            <person name="Duan L."/>
            <person name="Rahardjo A.P."/>
            <person name="Puthavathana P."/>
            <person name="Buranathai C."/>
            <person name="Nguyen T.D."/>
            <person name="Estoepangestie A.T.S."/>
            <person name="Chaisingh A."/>
            <person name="Auewarakul P."/>
            <person name="Long H.T."/>
            <person name="Hanh N.T.H."/>
            <person name="Webby R.J."/>
            <person name="Poon L.L.M."/>
            <person name="Chen H."/>
            <person name="Shortridge K.F."/>
            <person name="Yuen K.Y."/>
            <person name="Webster R.G."/>
            <person name="Peiris J.S.M."/>
        </authorList>
    </citation>
    <scope>NUCLEOTIDE SEQUENCE [GENOMIC RNA]</scope>
</reference>
<name>M1_I02A1</name>
<proteinExistence type="inferred from homology"/>
<feature type="chain" id="PRO_0000311611" description="Matrix protein 1">
    <location>
        <begin position="1" status="less than"/>
        <end position="245"/>
    </location>
</feature>
<feature type="region of interest" description="Membrane-binding" evidence="1">
    <location>
        <begin position="1" status="less than"/>
        <end position="157"/>
    </location>
</feature>
<feature type="region of interest" description="RNP-binding" evidence="1">
    <location>
        <begin position="158"/>
        <end position="245"/>
    </location>
</feature>
<feature type="short sequence motif" description="Nuclear localization signal" evidence="1">
    <location>
        <begin position="94"/>
        <end position="98"/>
    </location>
</feature>
<feature type="non-terminal residue">
    <location>
        <position position="1"/>
    </location>
</feature>
<keyword id="KW-0025">Alternative splicing</keyword>
<keyword id="KW-1048">Host nucleus</keyword>
<keyword id="KW-0472">Membrane</keyword>
<keyword id="KW-0694">RNA-binding</keyword>
<keyword id="KW-0468">Viral matrix protein</keyword>
<keyword id="KW-0946">Virion</keyword>
<comment type="function">
    <text evidence="1">Plays critical roles in virus replication, from virus entry and uncoating to assembly and budding of the virus particle. M1 binding to ribonucleocapsids (RNPs) in nucleus seems to inhibit viral transcription. Interaction of viral NEP with M1-RNP is thought to promote nuclear export of the complex, which is targeted to the virion assembly site at the apical plasma membrane in polarized epithelial cells. Interactions with NA and HA may bring M1, a non-raft-associated protein, into lipid rafts. Forms a continuous shell on the inner side of the lipid bilayer in virion, where it binds the RNP. During virus entry into cell, the M2 ion channel acidifies the internal virion core, inducing M1 dissociation from the RNP. M1-free RNPs are transported to the nucleus, where viral transcription and replication can take place (By similarity).</text>
</comment>
<comment type="function">
    <text evidence="1">Determines the virion's shape: spherical or filamentous. Clinical isolates of influenza are characterized by the presence of significant proportion of filamentous virions, whereas after multiple passage on eggs or cell culture, virions have only spherical morphology. Filamentous virions are thought to be important to infect neighboring cells, and spherical virions more suited to spread through aerosol between hosts organisms (By similarity).</text>
</comment>
<comment type="subunit">
    <text evidence="1">Homodimer and homomultimer. Interacts with NEP (By similarity). Binds ribonucleocapsid by both interacting with genomic RNA and NP protein. May interact with HA and NA (By similarity). Cannot bind NP without genomic RNA.</text>
</comment>
<comment type="subcellular location">
    <subcellularLocation>
        <location>Virion membrane</location>
        <topology>Multi-pass membrane protein</topology>
    </subcellularLocation>
    <subcellularLocation>
        <location evidence="1">Host nucleus</location>
    </subcellularLocation>
</comment>
<comment type="alternative products">
    <event type="alternative splicing"/>
    <isoform>
        <id>Q6DPU2-1</id>
        <name>M1</name>
        <sequence type="displayed"/>
    </isoform>
    <isoform>
        <id>Q6DPU3-1</id>
        <name>M2</name>
        <sequence type="external"/>
    </isoform>
    <text>Only the first 9 residues are shared by the 2 isoforms.</text>
</comment>
<comment type="miscellaneous">
    <text>Most abundant protein in virion. When expressed alone can form virus-like particles in transfected cells.</text>
</comment>
<comment type="similarity">
    <text evidence="2">Belongs to the influenza viruses Matrix protein M1 family.</text>
</comment>